<organism>
    <name type="scientific">Phocaeicola vulgatus (strain ATCC 8482 / DSM 1447 / JCM 5826 / CCUG 4940 / NBRC 14291 / NCTC 11154)</name>
    <name type="common">Bacteroides vulgatus</name>
    <dbReference type="NCBI Taxonomy" id="435590"/>
    <lineage>
        <taxon>Bacteria</taxon>
        <taxon>Pseudomonadati</taxon>
        <taxon>Bacteroidota</taxon>
        <taxon>Bacteroidia</taxon>
        <taxon>Bacteroidales</taxon>
        <taxon>Bacteroidaceae</taxon>
        <taxon>Phocaeicola</taxon>
    </lineage>
</organism>
<comment type="function">
    <text evidence="1">Catalyzes the conversion of D-ribulose 5-phosphate to formate and 3,4-dihydroxy-2-butanone 4-phosphate.</text>
</comment>
<comment type="function">
    <text evidence="1">Catalyzes the conversion of GTP to 2,5-diamino-6-ribosylamino-4(3H)-pyrimidinone 5'-phosphate (DARP), formate and pyrophosphate.</text>
</comment>
<comment type="catalytic activity">
    <reaction evidence="1">
        <text>D-ribulose 5-phosphate = (2S)-2-hydroxy-3-oxobutyl phosphate + formate + H(+)</text>
        <dbReference type="Rhea" id="RHEA:18457"/>
        <dbReference type="ChEBI" id="CHEBI:15378"/>
        <dbReference type="ChEBI" id="CHEBI:15740"/>
        <dbReference type="ChEBI" id="CHEBI:58121"/>
        <dbReference type="ChEBI" id="CHEBI:58830"/>
        <dbReference type="EC" id="4.1.99.12"/>
    </reaction>
</comment>
<comment type="catalytic activity">
    <reaction evidence="1">
        <text>GTP + 4 H2O = 2,5-diamino-6-hydroxy-4-(5-phosphoribosylamino)-pyrimidine + formate + 2 phosphate + 3 H(+)</text>
        <dbReference type="Rhea" id="RHEA:23704"/>
        <dbReference type="ChEBI" id="CHEBI:15377"/>
        <dbReference type="ChEBI" id="CHEBI:15378"/>
        <dbReference type="ChEBI" id="CHEBI:15740"/>
        <dbReference type="ChEBI" id="CHEBI:37565"/>
        <dbReference type="ChEBI" id="CHEBI:43474"/>
        <dbReference type="ChEBI" id="CHEBI:58614"/>
        <dbReference type="EC" id="3.5.4.25"/>
    </reaction>
</comment>
<comment type="cofactor">
    <cofactor evidence="1">
        <name>Mg(2+)</name>
        <dbReference type="ChEBI" id="CHEBI:18420"/>
    </cofactor>
    <cofactor evidence="1">
        <name>Mn(2+)</name>
        <dbReference type="ChEBI" id="CHEBI:29035"/>
    </cofactor>
    <text evidence="1">Binds 2 divalent metal cations per subunit. Magnesium or manganese.</text>
</comment>
<comment type="cofactor">
    <cofactor evidence="1">
        <name>Zn(2+)</name>
        <dbReference type="ChEBI" id="CHEBI:29105"/>
    </cofactor>
    <text evidence="1">Binds 1 zinc ion per subunit.</text>
</comment>
<comment type="pathway">
    <text evidence="1">Cofactor biosynthesis; riboflavin biosynthesis; 2-hydroxy-3-oxobutyl phosphate from D-ribulose 5-phosphate: step 1/1.</text>
</comment>
<comment type="pathway">
    <text evidence="1">Cofactor biosynthesis; riboflavin biosynthesis; 5-amino-6-(D-ribitylamino)uracil from GTP: step 1/4.</text>
</comment>
<comment type="similarity">
    <text evidence="1">In the N-terminal section; belongs to the DHBP synthase family.</text>
</comment>
<comment type="similarity">
    <text evidence="1">In the C-terminal section; belongs to the GTP cyclohydrolase II family.</text>
</comment>
<dbReference type="EC" id="4.1.99.12" evidence="1"/>
<dbReference type="EC" id="3.5.4.25" evidence="1"/>
<dbReference type="EMBL" id="CP000139">
    <property type="protein sequence ID" value="ABR37871.1"/>
    <property type="molecule type" value="Genomic_DNA"/>
</dbReference>
<dbReference type="RefSeq" id="WP_005841905.1">
    <property type="nucleotide sequence ID" value="NZ_CAXVNH010000027.1"/>
</dbReference>
<dbReference type="SMR" id="A6KWQ7"/>
<dbReference type="STRING" id="435590.BVU_0143"/>
<dbReference type="PaxDb" id="435590-BVU_0143"/>
<dbReference type="GeneID" id="5301113"/>
<dbReference type="KEGG" id="bvu:BVU_0143"/>
<dbReference type="eggNOG" id="COG0108">
    <property type="taxonomic scope" value="Bacteria"/>
</dbReference>
<dbReference type="eggNOG" id="COG0807">
    <property type="taxonomic scope" value="Bacteria"/>
</dbReference>
<dbReference type="HOGENOM" id="CLU_020273_1_2_10"/>
<dbReference type="BioCyc" id="BVUL435590:G1G59-149-MONOMER"/>
<dbReference type="UniPathway" id="UPA00275">
    <property type="reaction ID" value="UER00399"/>
</dbReference>
<dbReference type="UniPathway" id="UPA00275">
    <property type="reaction ID" value="UER00400"/>
</dbReference>
<dbReference type="Proteomes" id="UP000002861">
    <property type="component" value="Chromosome"/>
</dbReference>
<dbReference type="GO" id="GO:0005829">
    <property type="term" value="C:cytosol"/>
    <property type="evidence" value="ECO:0007669"/>
    <property type="project" value="TreeGrafter"/>
</dbReference>
<dbReference type="GO" id="GO:0008686">
    <property type="term" value="F:3,4-dihydroxy-2-butanone-4-phosphate synthase activity"/>
    <property type="evidence" value="ECO:0007669"/>
    <property type="project" value="UniProtKB-UniRule"/>
</dbReference>
<dbReference type="GO" id="GO:0005525">
    <property type="term" value="F:GTP binding"/>
    <property type="evidence" value="ECO:0007669"/>
    <property type="project" value="UniProtKB-KW"/>
</dbReference>
<dbReference type="GO" id="GO:0003935">
    <property type="term" value="F:GTP cyclohydrolase II activity"/>
    <property type="evidence" value="ECO:0007669"/>
    <property type="project" value="UniProtKB-UniRule"/>
</dbReference>
<dbReference type="GO" id="GO:0000287">
    <property type="term" value="F:magnesium ion binding"/>
    <property type="evidence" value="ECO:0007669"/>
    <property type="project" value="UniProtKB-UniRule"/>
</dbReference>
<dbReference type="GO" id="GO:0030145">
    <property type="term" value="F:manganese ion binding"/>
    <property type="evidence" value="ECO:0007669"/>
    <property type="project" value="UniProtKB-UniRule"/>
</dbReference>
<dbReference type="GO" id="GO:0008270">
    <property type="term" value="F:zinc ion binding"/>
    <property type="evidence" value="ECO:0007669"/>
    <property type="project" value="UniProtKB-UniRule"/>
</dbReference>
<dbReference type="GO" id="GO:0009231">
    <property type="term" value="P:riboflavin biosynthetic process"/>
    <property type="evidence" value="ECO:0007669"/>
    <property type="project" value="UniProtKB-UniRule"/>
</dbReference>
<dbReference type="CDD" id="cd00641">
    <property type="entry name" value="GTP_cyclohydro2"/>
    <property type="match status" value="1"/>
</dbReference>
<dbReference type="FunFam" id="3.40.50.10990:FF:000001">
    <property type="entry name" value="Riboflavin biosynthesis protein RibBA"/>
    <property type="match status" value="1"/>
</dbReference>
<dbReference type="FunFam" id="3.90.870.10:FF:000001">
    <property type="entry name" value="Riboflavin biosynthesis protein RibBA"/>
    <property type="match status" value="1"/>
</dbReference>
<dbReference type="Gene3D" id="3.90.870.10">
    <property type="entry name" value="DHBP synthase"/>
    <property type="match status" value="1"/>
</dbReference>
<dbReference type="Gene3D" id="3.40.50.10990">
    <property type="entry name" value="GTP cyclohydrolase II"/>
    <property type="match status" value="1"/>
</dbReference>
<dbReference type="HAMAP" id="MF_00179">
    <property type="entry name" value="RibA"/>
    <property type="match status" value="1"/>
</dbReference>
<dbReference type="HAMAP" id="MF_00180">
    <property type="entry name" value="RibB"/>
    <property type="match status" value="1"/>
</dbReference>
<dbReference type="HAMAP" id="MF_01283">
    <property type="entry name" value="RibBA"/>
    <property type="match status" value="1"/>
</dbReference>
<dbReference type="InterPro" id="IPR017945">
    <property type="entry name" value="DHBP_synth_RibB-like_a/b_dom"/>
</dbReference>
<dbReference type="InterPro" id="IPR000422">
    <property type="entry name" value="DHBP_synthase_RibB"/>
</dbReference>
<dbReference type="InterPro" id="IPR032677">
    <property type="entry name" value="GTP_cyclohydro_II"/>
</dbReference>
<dbReference type="InterPro" id="IPR000926">
    <property type="entry name" value="RibA"/>
</dbReference>
<dbReference type="InterPro" id="IPR036144">
    <property type="entry name" value="RibA-like_sf"/>
</dbReference>
<dbReference type="InterPro" id="IPR016299">
    <property type="entry name" value="Riboflavin_synth_RibBA"/>
</dbReference>
<dbReference type="NCBIfam" id="NF001591">
    <property type="entry name" value="PRK00393.1"/>
    <property type="match status" value="1"/>
</dbReference>
<dbReference type="NCBIfam" id="NF006803">
    <property type="entry name" value="PRK09311.1"/>
    <property type="match status" value="1"/>
</dbReference>
<dbReference type="NCBIfam" id="TIGR00505">
    <property type="entry name" value="ribA"/>
    <property type="match status" value="1"/>
</dbReference>
<dbReference type="NCBIfam" id="TIGR00506">
    <property type="entry name" value="ribB"/>
    <property type="match status" value="1"/>
</dbReference>
<dbReference type="PANTHER" id="PTHR21327:SF18">
    <property type="entry name" value="3,4-DIHYDROXY-2-BUTANONE 4-PHOSPHATE SYNTHASE"/>
    <property type="match status" value="1"/>
</dbReference>
<dbReference type="PANTHER" id="PTHR21327">
    <property type="entry name" value="GTP CYCLOHYDROLASE II-RELATED"/>
    <property type="match status" value="1"/>
</dbReference>
<dbReference type="Pfam" id="PF00926">
    <property type="entry name" value="DHBP_synthase"/>
    <property type="match status" value="1"/>
</dbReference>
<dbReference type="Pfam" id="PF00925">
    <property type="entry name" value="GTP_cyclohydro2"/>
    <property type="match status" value="1"/>
</dbReference>
<dbReference type="PIRSF" id="PIRSF001259">
    <property type="entry name" value="RibA"/>
    <property type="match status" value="1"/>
</dbReference>
<dbReference type="SUPFAM" id="SSF142695">
    <property type="entry name" value="RibA-like"/>
    <property type="match status" value="1"/>
</dbReference>
<dbReference type="SUPFAM" id="SSF55821">
    <property type="entry name" value="YrdC/RibB"/>
    <property type="match status" value="1"/>
</dbReference>
<feature type="chain" id="PRO_1000165249" description="Riboflavin biosynthesis protein RibBA">
    <location>
        <begin position="1"/>
        <end position="404"/>
    </location>
</feature>
<feature type="region of interest" description="DHBP synthase">
    <location>
        <begin position="1"/>
        <end position="204"/>
    </location>
</feature>
<feature type="region of interest" description="GTP cyclohydrolase II">
    <location>
        <begin position="205"/>
        <end position="404"/>
    </location>
</feature>
<feature type="active site" description="Proton acceptor; for GTP cyclohydrolase activity" evidence="1">
    <location>
        <position position="332"/>
    </location>
</feature>
<feature type="active site" description="Nucleophile; for GTP cyclohydrolase activity" evidence="1">
    <location>
        <position position="334"/>
    </location>
</feature>
<feature type="binding site" evidence="1">
    <location>
        <begin position="30"/>
        <end position="31"/>
    </location>
    <ligand>
        <name>D-ribulose 5-phosphate</name>
        <dbReference type="ChEBI" id="CHEBI:58121"/>
    </ligand>
</feature>
<feature type="binding site" evidence="1">
    <location>
        <position position="31"/>
    </location>
    <ligand>
        <name>Mg(2+)</name>
        <dbReference type="ChEBI" id="CHEBI:18420"/>
        <label>1</label>
    </ligand>
</feature>
<feature type="binding site" evidence="1">
    <location>
        <position position="31"/>
    </location>
    <ligand>
        <name>Mg(2+)</name>
        <dbReference type="ChEBI" id="CHEBI:18420"/>
        <label>2</label>
    </ligand>
</feature>
<feature type="binding site" evidence="1">
    <location>
        <position position="35"/>
    </location>
    <ligand>
        <name>D-ribulose 5-phosphate</name>
        <dbReference type="ChEBI" id="CHEBI:58121"/>
    </ligand>
</feature>
<feature type="binding site" evidence="1">
    <location>
        <begin position="143"/>
        <end position="147"/>
    </location>
    <ligand>
        <name>D-ribulose 5-phosphate</name>
        <dbReference type="ChEBI" id="CHEBI:58121"/>
    </ligand>
</feature>
<feature type="binding site" evidence="1">
    <location>
        <position position="146"/>
    </location>
    <ligand>
        <name>Mg(2+)</name>
        <dbReference type="ChEBI" id="CHEBI:18420"/>
        <label>2</label>
    </ligand>
</feature>
<feature type="binding site" evidence="1">
    <location>
        <position position="167"/>
    </location>
    <ligand>
        <name>D-ribulose 5-phosphate</name>
        <dbReference type="ChEBI" id="CHEBI:58121"/>
    </ligand>
</feature>
<feature type="binding site" evidence="1">
    <location>
        <begin position="255"/>
        <end position="259"/>
    </location>
    <ligand>
        <name>GTP</name>
        <dbReference type="ChEBI" id="CHEBI:37565"/>
    </ligand>
</feature>
<feature type="binding site" evidence="1">
    <location>
        <position position="260"/>
    </location>
    <ligand>
        <name>Zn(2+)</name>
        <dbReference type="ChEBI" id="CHEBI:29105"/>
        <note>catalytic</note>
    </ligand>
</feature>
<feature type="binding site" evidence="1">
    <location>
        <position position="271"/>
    </location>
    <ligand>
        <name>Zn(2+)</name>
        <dbReference type="ChEBI" id="CHEBI:29105"/>
        <note>catalytic</note>
    </ligand>
</feature>
<feature type="binding site" evidence="1">
    <location>
        <position position="273"/>
    </location>
    <ligand>
        <name>Zn(2+)</name>
        <dbReference type="ChEBI" id="CHEBI:29105"/>
        <note>catalytic</note>
    </ligand>
</feature>
<feature type="binding site" evidence="1">
    <location>
        <position position="276"/>
    </location>
    <ligand>
        <name>GTP</name>
        <dbReference type="ChEBI" id="CHEBI:37565"/>
    </ligand>
</feature>
<feature type="binding site" evidence="1">
    <location>
        <begin position="298"/>
        <end position="300"/>
    </location>
    <ligand>
        <name>GTP</name>
        <dbReference type="ChEBI" id="CHEBI:37565"/>
    </ligand>
</feature>
<feature type="binding site" evidence="1">
    <location>
        <position position="320"/>
    </location>
    <ligand>
        <name>GTP</name>
        <dbReference type="ChEBI" id="CHEBI:37565"/>
    </ligand>
</feature>
<feature type="binding site" evidence="1">
    <location>
        <position position="355"/>
    </location>
    <ligand>
        <name>GTP</name>
        <dbReference type="ChEBI" id="CHEBI:37565"/>
    </ligand>
</feature>
<feature type="binding site" evidence="1">
    <location>
        <position position="360"/>
    </location>
    <ligand>
        <name>GTP</name>
        <dbReference type="ChEBI" id="CHEBI:37565"/>
    </ligand>
</feature>
<feature type="site" description="Essential for DHBP synthase activity" evidence="1">
    <location>
        <position position="129"/>
    </location>
</feature>
<feature type="site" description="Essential for DHBP synthase activity" evidence="1">
    <location>
        <position position="167"/>
    </location>
</feature>
<evidence type="ECO:0000255" key="1">
    <source>
        <dbReference type="HAMAP-Rule" id="MF_01283"/>
    </source>
</evidence>
<proteinExistence type="inferred from homology"/>
<name>RIBBA_PHOV8</name>
<keyword id="KW-0342">GTP-binding</keyword>
<keyword id="KW-0378">Hydrolase</keyword>
<keyword id="KW-0456">Lyase</keyword>
<keyword id="KW-0460">Magnesium</keyword>
<keyword id="KW-0464">Manganese</keyword>
<keyword id="KW-0479">Metal-binding</keyword>
<keyword id="KW-0511">Multifunctional enzyme</keyword>
<keyword id="KW-0547">Nucleotide-binding</keyword>
<keyword id="KW-0686">Riboflavin biosynthesis</keyword>
<keyword id="KW-0862">Zinc</keyword>
<accession>A6KWQ7</accession>
<reference key="1">
    <citation type="journal article" date="2007" name="PLoS Biol.">
        <title>Evolution of symbiotic bacteria in the distal human intestine.</title>
        <authorList>
            <person name="Xu J."/>
            <person name="Mahowald M.A."/>
            <person name="Ley R.E."/>
            <person name="Lozupone C.A."/>
            <person name="Hamady M."/>
            <person name="Martens E.C."/>
            <person name="Henrissat B."/>
            <person name="Coutinho P.M."/>
            <person name="Minx P."/>
            <person name="Latreille P."/>
            <person name="Cordum H."/>
            <person name="Van Brunt A."/>
            <person name="Kim K."/>
            <person name="Fulton R.S."/>
            <person name="Fulton L.A."/>
            <person name="Clifton S.W."/>
            <person name="Wilson R.K."/>
            <person name="Knight R.D."/>
            <person name="Gordon J.I."/>
        </authorList>
    </citation>
    <scope>NUCLEOTIDE SEQUENCE [LARGE SCALE GENOMIC DNA]</scope>
    <source>
        <strain>ATCC 8482 / DSM 1447 / JCM 5826 / CCUG 4940 / NBRC 14291 / NCTC 11154</strain>
    </source>
</reference>
<sequence>MEELKLNTIEEAIADFREGKFVIVVDDEDRENEGDLIVAAEKITPEQVNFMLKHARGVLCAPITISRCKELELPHQVDTNTSVLGTPFTVTVDKLEGCSTGVSIHDRAATIRALADPTSTPETFGRPGHVNPLYAQDKGVLRRAGHTEACIDMARLAGLYPAAALMEIMSEDGTMARLPELRKMADEWGLKLISIRDLIAYRLKQESLVEKGVEVDMPTEYGHFRLIPFRQKSNGLEHIAIIKGDIKEGEPVLVRVHSSCATGDIFGSMRCDCGEQLHKALQMIEKEGKGAVVYLNQEGRGIGLMEKMKAYKLQENGVDTVEANILLGHQADERDYGVGAQILRSIGVTQMRLLTNNPVKRVGLESYGLSIVENVPIEITPNKYNERYLKTKKDRMGHTLHFNK</sequence>
<protein>
    <recommendedName>
        <fullName evidence="1">Riboflavin biosynthesis protein RibBA</fullName>
    </recommendedName>
    <domain>
        <recommendedName>
            <fullName evidence="1">3,4-dihydroxy-2-butanone 4-phosphate synthase</fullName>
            <shortName evidence="1">DHBP synthase</shortName>
            <ecNumber evidence="1">4.1.99.12</ecNumber>
        </recommendedName>
    </domain>
    <domain>
        <recommendedName>
            <fullName evidence="1">GTP cyclohydrolase-2</fullName>
            <ecNumber evidence="1">3.5.4.25</ecNumber>
        </recommendedName>
        <alternativeName>
            <fullName evidence="1">GTP cyclohydrolase II</fullName>
        </alternativeName>
    </domain>
</protein>
<gene>
    <name evidence="1" type="primary">ribBA</name>
    <name type="ordered locus">BVU_0143</name>
</gene>